<comment type="function">
    <text evidence="2">This enzyme decreases the intracellular concentration of dUTP so that uracil cannot be incorporated into viral progeny DNA. This activity is sufficient to exclude uracil from the DNA during phage replication. In the case of dUTPase mutant phages, the host dUTPase activity is not sufficient to exclude uracil from T5 DNA and uracil are incorporated, leading to decreased phage viability.</text>
</comment>
<comment type="catalytic activity">
    <reaction evidence="2">
        <text>dUTP + H2O = dUMP + diphosphate + H(+)</text>
        <dbReference type="Rhea" id="RHEA:10248"/>
        <dbReference type="ChEBI" id="CHEBI:15377"/>
        <dbReference type="ChEBI" id="CHEBI:15378"/>
        <dbReference type="ChEBI" id="CHEBI:33019"/>
        <dbReference type="ChEBI" id="CHEBI:61555"/>
        <dbReference type="ChEBI" id="CHEBI:246422"/>
        <dbReference type="EC" id="3.6.1.23"/>
    </reaction>
</comment>
<comment type="cofactor">
    <cofactor evidence="1">
        <name>Mg(2+)</name>
        <dbReference type="ChEBI" id="CHEBI:18420"/>
    </cofactor>
</comment>
<comment type="pathway">
    <text>Pyrimidine metabolism; dUMP biosynthesis; dUMP from dCTP (dUTP route): step 2/2.</text>
</comment>
<comment type="induction">
    <text evidence="4">Expressed in the early phase of the viral replicative cycle.</text>
</comment>
<comment type="similarity">
    <text evidence="3">Belongs to the dUTPase family.</text>
</comment>
<feature type="chain" id="PRO_0000182970" description="Deoxyuridine 5'-triphosphate nucleotidohydrolase">
    <location>
        <begin position="1"/>
        <end position="148"/>
    </location>
</feature>
<feature type="strand" evidence="7">
    <location>
        <begin position="2"/>
        <end position="8"/>
    </location>
</feature>
<feature type="helix" evidence="7">
    <location>
        <begin position="9"/>
        <end position="11"/>
    </location>
</feature>
<feature type="strand" evidence="7">
    <location>
        <begin position="21"/>
        <end position="26"/>
    </location>
</feature>
<feature type="strand" evidence="7">
    <location>
        <begin position="31"/>
        <end position="33"/>
    </location>
</feature>
<feature type="strand" evidence="7">
    <location>
        <begin position="36"/>
        <end position="40"/>
    </location>
</feature>
<feature type="strand" evidence="7">
    <location>
        <begin position="45"/>
        <end position="55"/>
    </location>
</feature>
<feature type="strand" evidence="7">
    <location>
        <begin position="60"/>
        <end position="66"/>
    </location>
</feature>
<feature type="helix" evidence="7">
    <location>
        <begin position="69"/>
        <end position="73"/>
    </location>
</feature>
<feature type="strand" evidence="7">
    <location>
        <begin position="75"/>
        <end position="77"/>
    </location>
</feature>
<feature type="strand" evidence="7">
    <location>
        <begin position="80"/>
        <end position="84"/>
    </location>
</feature>
<feature type="strand" evidence="7">
    <location>
        <begin position="90"/>
        <end position="98"/>
    </location>
</feature>
<feature type="strand" evidence="7">
    <location>
        <begin position="100"/>
        <end position="102"/>
    </location>
</feature>
<feature type="strand" evidence="7">
    <location>
        <begin position="104"/>
        <end position="107"/>
    </location>
</feature>
<feature type="strand" evidence="7">
    <location>
        <begin position="111"/>
        <end position="119"/>
    </location>
</feature>
<feature type="strand" evidence="7">
    <location>
        <begin position="125"/>
        <end position="131"/>
    </location>
</feature>
<protein>
    <recommendedName>
        <fullName>Deoxyuridine 5'-triphosphate nucleotidohydrolase</fullName>
        <shortName>dUTPase</shortName>
        <ecNumber evidence="3">3.6.1.23</ecNumber>
    </recommendedName>
    <alternativeName>
        <fullName>dUTP pyrophosphatase</fullName>
    </alternativeName>
</protein>
<evidence type="ECO:0000250" key="1"/>
<evidence type="ECO:0000269" key="2">
    <source>
    </source>
</evidence>
<evidence type="ECO:0000305" key="3"/>
<evidence type="ECO:0000305" key="4">
    <source>
    </source>
</evidence>
<evidence type="ECO:0000312" key="5">
    <source>
        <dbReference type="EMBL" id="AAS77177.1"/>
    </source>
</evidence>
<evidence type="ECO:0000312" key="6">
    <source>
        <dbReference type="EMBL" id="AAU05268.1"/>
    </source>
</evidence>
<evidence type="ECO:0007829" key="7">
    <source>
        <dbReference type="PDB" id="8QKY"/>
    </source>
</evidence>
<name>DUT_BPT5</name>
<sequence length="148" mass="16204">MIKIKLTHPDCMPKIGSEDAAGMDLRAFFGTNPAADLRAIAPGKSLMIDTGVAVEIPRGWFGLVVPRSSLGKRHLMIANTAGVIDSDYRGTIKMNLYNYGSEMQTLENFERLCQLVVLPHYSTHNFKIVDELEETIRGEGGFGSSGSK</sequence>
<proteinExistence type="evidence at protein level"/>
<reference key="1">
    <citation type="journal article" date="1996" name="DNA Seq.">
        <title>Identification of the bacteriophage T5 dUTPase by protein sequence comparisons.</title>
        <authorList>
            <person name="Kaliman A.V."/>
        </authorList>
    </citation>
    <scope>NUCLEOTIDE SEQUENCE [GENOMIC DNA]</scope>
    <scope>IDENTIFICATION</scope>
</reference>
<reference key="2">
    <citation type="submission" date="2004-01" db="EMBL/GenBank/DDBJ databases">
        <title>Bacteriophage T5 complete genome.</title>
        <authorList>
            <person name="Ksenzenko V.N."/>
            <person name="Kaliman A.V."/>
            <person name="Krutilina A.I."/>
            <person name="Shlyapnikov M.G."/>
        </authorList>
    </citation>
    <scope>NUCLEOTIDE SEQUENCE [LARGE SCALE GENOMIC DNA]</scope>
</reference>
<reference key="3">
    <citation type="journal article" date="2005" name="Virology">
        <title>Complete genome sequence of bacteriophage T5.</title>
        <authorList>
            <person name="Wang J."/>
            <person name="Jiang Y."/>
            <person name="Vincent M."/>
            <person name="Sun Y."/>
            <person name="Yu H."/>
            <person name="Wang J."/>
            <person name="Bao Q."/>
            <person name="Kong H."/>
            <person name="Hu S."/>
        </authorList>
    </citation>
    <scope>NUCLEOTIDE SEQUENCE [LARGE SCALE GENOMIC DNA]</scope>
    <scope>INDUCTION</scope>
    <source>
        <strain>ATCC 11303-B5</strain>
    </source>
</reference>
<reference key="4">
    <citation type="journal article" date="2014" name="J. Virol.">
        <title>Insights into bacteriophage T5 structure from analysis of its morphogenesis genes and protein components.</title>
        <authorList>
            <person name="Zivanovic Y."/>
            <person name="Confalonieri F."/>
            <person name="Ponchon L."/>
            <person name="Lurz R."/>
            <person name="Chami M."/>
            <person name="Flayhan A."/>
            <person name="Renouard M."/>
            <person name="Huet A."/>
            <person name="Decottignies P."/>
            <person name="Davidson A.R."/>
            <person name="Breyton C."/>
            <person name="Boulanger P."/>
        </authorList>
    </citation>
    <scope>NUCLEOTIDE SEQUENCE [LARGE SCALE GENOMIC DNA]</scope>
    <source>
        <strain>St0 deletion mutant</strain>
    </source>
</reference>
<reference key="5">
    <citation type="journal article" date="1979" name="J. Biol. Chem.">
        <title>The properties of a bacteriophage T5 mutant unable to induce deoxyuridine 5'-triphosphate nucleotidohydrolase. Synthesis of uracil-containing T5 deoxyribonucleic acid.</title>
        <authorList>
            <person name="Warner H.R."/>
            <person name="Thompson R.B."/>
            <person name="Mozer T.J."/>
            <person name="Duncan B.K."/>
        </authorList>
    </citation>
    <scope>IDENTIFICATION</scope>
    <scope>FUNCTION</scope>
    <scope>CATALYTIC ACTIVITY</scope>
</reference>
<gene>
    <name type="primary">DUT</name>
    <name evidence="5" type="ORF">T5.131</name>
    <name evidence="6" type="ORF">T5p129</name>
</gene>
<keyword id="KW-0002">3D-structure</keyword>
<keyword id="KW-0244">Early protein</keyword>
<keyword id="KW-0378">Hydrolase</keyword>
<keyword id="KW-0460">Magnesium</keyword>
<keyword id="KW-0479">Metal-binding</keyword>
<keyword id="KW-0546">Nucleotide metabolism</keyword>
<keyword id="KW-1185">Reference proteome</keyword>
<organismHost>
    <name type="scientific">Escherichia coli</name>
    <dbReference type="NCBI Taxonomy" id="562"/>
</organismHost>
<dbReference type="EC" id="3.6.1.23" evidence="3"/>
<dbReference type="EMBL" id="AY543070">
    <property type="protein sequence ID" value="AAS77177.1"/>
    <property type="molecule type" value="Genomic_DNA"/>
</dbReference>
<dbReference type="EMBL" id="AY692264">
    <property type="protein sequence ID" value="AAU05268.1"/>
    <property type="molecule type" value="Genomic_DNA"/>
</dbReference>
<dbReference type="EMBL" id="AY587007">
    <property type="protein sequence ID" value="AAX12059.1"/>
    <property type="molecule type" value="Genomic_DNA"/>
</dbReference>
<dbReference type="RefSeq" id="YP_006959.1">
    <property type="nucleotide sequence ID" value="NC_005859.1"/>
</dbReference>
<dbReference type="PDB" id="8QKY">
    <property type="method" value="X-ray"/>
    <property type="resolution" value="2.00 A"/>
    <property type="chains" value="A/B/C=1-148"/>
</dbReference>
<dbReference type="PDB" id="8QLD">
    <property type="method" value="X-ray"/>
    <property type="resolution" value="2.10 A"/>
    <property type="chains" value="A/B/C=1-148"/>
</dbReference>
<dbReference type="PDBsum" id="8QKY"/>
<dbReference type="PDBsum" id="8QLD"/>
<dbReference type="SMR" id="O48500"/>
<dbReference type="GeneID" id="2777637"/>
<dbReference type="KEGG" id="vg:2777637"/>
<dbReference type="UniPathway" id="UPA00610">
    <property type="reaction ID" value="UER00666"/>
</dbReference>
<dbReference type="Proteomes" id="UP000002107">
    <property type="component" value="Genome"/>
</dbReference>
<dbReference type="Proteomes" id="UP000002141">
    <property type="component" value="Segment"/>
</dbReference>
<dbReference type="Proteomes" id="UP000002503">
    <property type="component" value="Segment"/>
</dbReference>
<dbReference type="GO" id="GO:0004170">
    <property type="term" value="F:dUTP diphosphatase activity"/>
    <property type="evidence" value="ECO:0000314"/>
    <property type="project" value="UniProtKB"/>
</dbReference>
<dbReference type="GO" id="GO:0000287">
    <property type="term" value="F:magnesium ion binding"/>
    <property type="evidence" value="ECO:0007669"/>
    <property type="project" value="InterPro"/>
</dbReference>
<dbReference type="GO" id="GO:0006226">
    <property type="term" value="P:dUMP biosynthetic process"/>
    <property type="evidence" value="ECO:0007669"/>
    <property type="project" value="UniProtKB-UniPathway"/>
</dbReference>
<dbReference type="GO" id="GO:0046081">
    <property type="term" value="P:dUTP catabolic process"/>
    <property type="evidence" value="ECO:0007669"/>
    <property type="project" value="InterPro"/>
</dbReference>
<dbReference type="CDD" id="cd07557">
    <property type="entry name" value="trimeric_dUTPase"/>
    <property type="match status" value="1"/>
</dbReference>
<dbReference type="FunFam" id="2.70.40.10:FF:000010">
    <property type="entry name" value="DeoxyUTP pyrophosphatase"/>
    <property type="match status" value="1"/>
</dbReference>
<dbReference type="Gene3D" id="2.70.40.10">
    <property type="match status" value="1"/>
</dbReference>
<dbReference type="InterPro" id="IPR008181">
    <property type="entry name" value="dUTPase"/>
</dbReference>
<dbReference type="InterPro" id="IPR029054">
    <property type="entry name" value="dUTPase-like"/>
</dbReference>
<dbReference type="InterPro" id="IPR036157">
    <property type="entry name" value="dUTPase-like_sf"/>
</dbReference>
<dbReference type="InterPro" id="IPR033704">
    <property type="entry name" value="dUTPase_trimeric"/>
</dbReference>
<dbReference type="NCBIfam" id="TIGR00576">
    <property type="entry name" value="dut"/>
    <property type="match status" value="1"/>
</dbReference>
<dbReference type="NCBIfam" id="NF001862">
    <property type="entry name" value="PRK00601.1"/>
    <property type="match status" value="1"/>
</dbReference>
<dbReference type="PANTHER" id="PTHR11241">
    <property type="entry name" value="DEOXYURIDINE 5'-TRIPHOSPHATE NUCLEOTIDOHYDROLASE"/>
    <property type="match status" value="1"/>
</dbReference>
<dbReference type="PANTHER" id="PTHR11241:SF0">
    <property type="entry name" value="DEOXYURIDINE 5'-TRIPHOSPHATE NUCLEOTIDOHYDROLASE"/>
    <property type="match status" value="1"/>
</dbReference>
<dbReference type="Pfam" id="PF00692">
    <property type="entry name" value="dUTPase"/>
    <property type="match status" value="1"/>
</dbReference>
<dbReference type="SUPFAM" id="SSF51283">
    <property type="entry name" value="dUTPase-like"/>
    <property type="match status" value="1"/>
</dbReference>
<organism>
    <name type="scientific">Escherichia phage T5</name>
    <name type="common">Enterobacteria phage T5</name>
    <dbReference type="NCBI Taxonomy" id="2695836"/>
    <lineage>
        <taxon>Viruses</taxon>
        <taxon>Duplodnaviria</taxon>
        <taxon>Heunggongvirae</taxon>
        <taxon>Uroviricota</taxon>
        <taxon>Caudoviricetes</taxon>
        <taxon>Demerecviridae</taxon>
        <taxon>Markadamsvirinae</taxon>
        <taxon>Tequintavirus</taxon>
        <taxon>Tequintavirus T5</taxon>
    </lineage>
</organism>
<accession>O48500</accession>
<accession>Q66LT4</accession>